<proteinExistence type="inferred from homology"/>
<sequence length="344" mass="37895">MLRVAIAGASGYTGFELVRLLDRHPHAELKMITSRVHRGQRLDKVYPALRKHCDLVFEEPDPERLAAEADLVFTALPHRAAMDMIPDLLKGGAKVVDLSADYRFLDAAVYEAWYEPHKTPELLKEAVYGLPELHREEIRNARLVGNPGCYPTSVILAAAPLVAGKLADPRTLIADSKSGVSGAGRGVSLTVHFCEVNDGFKAYKVGEHRHTPEIEQELSRLAGEKLAVTFTPHLVPMSRGILSTVYATVIQGVTPEDISAAYESFYRNARFVRLCRAEMPTTLQVRGSNYCDIGWRLDSRTGRAVLIAVIDNLTRGASGQAICNMNIMCGFPEDCGLQDAPWQP</sequence>
<accession>A0LIV2</accession>
<comment type="function">
    <text evidence="1">Catalyzes the NADPH-dependent reduction of N-acetyl-5-glutamyl phosphate to yield N-acetyl-L-glutamate 5-semialdehyde.</text>
</comment>
<comment type="catalytic activity">
    <reaction evidence="1">
        <text>N-acetyl-L-glutamate 5-semialdehyde + phosphate + NADP(+) = N-acetyl-L-glutamyl 5-phosphate + NADPH + H(+)</text>
        <dbReference type="Rhea" id="RHEA:21588"/>
        <dbReference type="ChEBI" id="CHEBI:15378"/>
        <dbReference type="ChEBI" id="CHEBI:29123"/>
        <dbReference type="ChEBI" id="CHEBI:43474"/>
        <dbReference type="ChEBI" id="CHEBI:57783"/>
        <dbReference type="ChEBI" id="CHEBI:57936"/>
        <dbReference type="ChEBI" id="CHEBI:58349"/>
        <dbReference type="EC" id="1.2.1.38"/>
    </reaction>
</comment>
<comment type="pathway">
    <text evidence="1">Amino-acid biosynthesis; L-arginine biosynthesis; N(2)-acetyl-L-ornithine from L-glutamate: step 3/4.</text>
</comment>
<comment type="subcellular location">
    <subcellularLocation>
        <location evidence="1">Cytoplasm</location>
    </subcellularLocation>
</comment>
<comment type="similarity">
    <text evidence="1">Belongs to the NAGSA dehydrogenase family. Type 1 subfamily.</text>
</comment>
<organism>
    <name type="scientific">Syntrophobacter fumaroxidans (strain DSM 10017 / MPOB)</name>
    <dbReference type="NCBI Taxonomy" id="335543"/>
    <lineage>
        <taxon>Bacteria</taxon>
        <taxon>Pseudomonadati</taxon>
        <taxon>Thermodesulfobacteriota</taxon>
        <taxon>Syntrophobacteria</taxon>
        <taxon>Syntrophobacterales</taxon>
        <taxon>Syntrophobacteraceae</taxon>
        <taxon>Syntrophobacter</taxon>
    </lineage>
</organism>
<reference key="1">
    <citation type="submission" date="2006-10" db="EMBL/GenBank/DDBJ databases">
        <title>Complete sequence of Syntrophobacter fumaroxidans MPOB.</title>
        <authorList>
            <consortium name="US DOE Joint Genome Institute"/>
            <person name="Copeland A."/>
            <person name="Lucas S."/>
            <person name="Lapidus A."/>
            <person name="Barry K."/>
            <person name="Detter J.C."/>
            <person name="Glavina del Rio T."/>
            <person name="Hammon N."/>
            <person name="Israni S."/>
            <person name="Pitluck S."/>
            <person name="Goltsman E.G."/>
            <person name="Martinez M."/>
            <person name="Schmutz J."/>
            <person name="Larimer F."/>
            <person name="Land M."/>
            <person name="Hauser L."/>
            <person name="Kyrpides N."/>
            <person name="Kim E."/>
            <person name="Boone D.R."/>
            <person name="Brockman F."/>
            <person name="Culley D."/>
            <person name="Ferry J."/>
            <person name="Gunsalus R."/>
            <person name="McInerney M.J."/>
            <person name="Morrison M."/>
            <person name="Plugge C."/>
            <person name="Rohlin L."/>
            <person name="Scholten J."/>
            <person name="Sieber J."/>
            <person name="Stams A.J.M."/>
            <person name="Worm P."/>
            <person name="Henstra A.M."/>
            <person name="Richardson P."/>
        </authorList>
    </citation>
    <scope>NUCLEOTIDE SEQUENCE [LARGE SCALE GENOMIC DNA]</scope>
    <source>
        <strain>DSM 10017 / MPOB</strain>
    </source>
</reference>
<dbReference type="EC" id="1.2.1.38" evidence="1"/>
<dbReference type="EMBL" id="CP000478">
    <property type="protein sequence ID" value="ABK17354.1"/>
    <property type="molecule type" value="Genomic_DNA"/>
</dbReference>
<dbReference type="RefSeq" id="WP_011698524.1">
    <property type="nucleotide sequence ID" value="NC_008554.1"/>
</dbReference>
<dbReference type="SMR" id="A0LIV2"/>
<dbReference type="FunCoup" id="A0LIV2">
    <property type="interactions" value="333"/>
</dbReference>
<dbReference type="STRING" id="335543.Sfum_1667"/>
<dbReference type="KEGG" id="sfu:Sfum_1667"/>
<dbReference type="eggNOG" id="COG0002">
    <property type="taxonomic scope" value="Bacteria"/>
</dbReference>
<dbReference type="HOGENOM" id="CLU_006384_0_1_7"/>
<dbReference type="InParanoid" id="A0LIV2"/>
<dbReference type="OrthoDB" id="9801289at2"/>
<dbReference type="UniPathway" id="UPA00068">
    <property type="reaction ID" value="UER00108"/>
</dbReference>
<dbReference type="Proteomes" id="UP000001784">
    <property type="component" value="Chromosome"/>
</dbReference>
<dbReference type="GO" id="GO:0005737">
    <property type="term" value="C:cytoplasm"/>
    <property type="evidence" value="ECO:0007669"/>
    <property type="project" value="UniProtKB-SubCell"/>
</dbReference>
<dbReference type="GO" id="GO:0003942">
    <property type="term" value="F:N-acetyl-gamma-glutamyl-phosphate reductase activity"/>
    <property type="evidence" value="ECO:0007669"/>
    <property type="project" value="UniProtKB-UniRule"/>
</dbReference>
<dbReference type="GO" id="GO:0051287">
    <property type="term" value="F:NAD binding"/>
    <property type="evidence" value="ECO:0007669"/>
    <property type="project" value="InterPro"/>
</dbReference>
<dbReference type="GO" id="GO:0070401">
    <property type="term" value="F:NADP+ binding"/>
    <property type="evidence" value="ECO:0007669"/>
    <property type="project" value="InterPro"/>
</dbReference>
<dbReference type="GO" id="GO:0006526">
    <property type="term" value="P:L-arginine biosynthetic process"/>
    <property type="evidence" value="ECO:0007669"/>
    <property type="project" value="UniProtKB-UniRule"/>
</dbReference>
<dbReference type="CDD" id="cd23934">
    <property type="entry name" value="AGPR_1_C"/>
    <property type="match status" value="1"/>
</dbReference>
<dbReference type="CDD" id="cd17895">
    <property type="entry name" value="AGPR_1_N"/>
    <property type="match status" value="1"/>
</dbReference>
<dbReference type="FunFam" id="3.30.360.10:FF:000014">
    <property type="entry name" value="N-acetyl-gamma-glutamyl-phosphate reductase"/>
    <property type="match status" value="1"/>
</dbReference>
<dbReference type="Gene3D" id="3.30.360.10">
    <property type="entry name" value="Dihydrodipicolinate Reductase, domain 2"/>
    <property type="match status" value="1"/>
</dbReference>
<dbReference type="Gene3D" id="3.40.50.720">
    <property type="entry name" value="NAD(P)-binding Rossmann-like Domain"/>
    <property type="match status" value="1"/>
</dbReference>
<dbReference type="HAMAP" id="MF_00150">
    <property type="entry name" value="ArgC_type1"/>
    <property type="match status" value="1"/>
</dbReference>
<dbReference type="InterPro" id="IPR023013">
    <property type="entry name" value="AGPR_AS"/>
</dbReference>
<dbReference type="InterPro" id="IPR000706">
    <property type="entry name" value="AGPR_type-1"/>
</dbReference>
<dbReference type="InterPro" id="IPR036291">
    <property type="entry name" value="NAD(P)-bd_dom_sf"/>
</dbReference>
<dbReference type="InterPro" id="IPR050085">
    <property type="entry name" value="NAGSA_dehydrogenase"/>
</dbReference>
<dbReference type="InterPro" id="IPR000534">
    <property type="entry name" value="Semialdehyde_DH_NAD-bd"/>
</dbReference>
<dbReference type="NCBIfam" id="TIGR01850">
    <property type="entry name" value="argC"/>
    <property type="match status" value="1"/>
</dbReference>
<dbReference type="PANTHER" id="PTHR32338:SF10">
    <property type="entry name" value="N-ACETYL-GAMMA-GLUTAMYL-PHOSPHATE REDUCTASE, CHLOROPLASTIC-RELATED"/>
    <property type="match status" value="1"/>
</dbReference>
<dbReference type="PANTHER" id="PTHR32338">
    <property type="entry name" value="N-ACETYL-GAMMA-GLUTAMYL-PHOSPHATE REDUCTASE, CHLOROPLASTIC-RELATED-RELATED"/>
    <property type="match status" value="1"/>
</dbReference>
<dbReference type="Pfam" id="PF01118">
    <property type="entry name" value="Semialdhyde_dh"/>
    <property type="match status" value="1"/>
</dbReference>
<dbReference type="Pfam" id="PF22698">
    <property type="entry name" value="Semialdhyde_dhC_1"/>
    <property type="match status" value="1"/>
</dbReference>
<dbReference type="SMART" id="SM00859">
    <property type="entry name" value="Semialdhyde_dh"/>
    <property type="match status" value="1"/>
</dbReference>
<dbReference type="SUPFAM" id="SSF55347">
    <property type="entry name" value="Glyceraldehyde-3-phosphate dehydrogenase-like, C-terminal domain"/>
    <property type="match status" value="1"/>
</dbReference>
<dbReference type="SUPFAM" id="SSF51735">
    <property type="entry name" value="NAD(P)-binding Rossmann-fold domains"/>
    <property type="match status" value="1"/>
</dbReference>
<dbReference type="PROSITE" id="PS01224">
    <property type="entry name" value="ARGC"/>
    <property type="match status" value="1"/>
</dbReference>
<name>ARGC_SYNFM</name>
<keyword id="KW-0028">Amino-acid biosynthesis</keyword>
<keyword id="KW-0055">Arginine biosynthesis</keyword>
<keyword id="KW-0963">Cytoplasm</keyword>
<keyword id="KW-0521">NADP</keyword>
<keyword id="KW-0560">Oxidoreductase</keyword>
<keyword id="KW-1185">Reference proteome</keyword>
<feature type="chain" id="PRO_1000011072" description="N-acetyl-gamma-glutamyl-phosphate reductase">
    <location>
        <begin position="1"/>
        <end position="344"/>
    </location>
</feature>
<feature type="active site" evidence="1">
    <location>
        <position position="149"/>
    </location>
</feature>
<protein>
    <recommendedName>
        <fullName evidence="1">N-acetyl-gamma-glutamyl-phosphate reductase</fullName>
        <shortName evidence="1">AGPR</shortName>
        <ecNumber evidence="1">1.2.1.38</ecNumber>
    </recommendedName>
    <alternativeName>
        <fullName evidence="1">N-acetyl-glutamate semialdehyde dehydrogenase</fullName>
        <shortName evidence="1">NAGSA dehydrogenase</shortName>
    </alternativeName>
</protein>
<evidence type="ECO:0000255" key="1">
    <source>
        <dbReference type="HAMAP-Rule" id="MF_00150"/>
    </source>
</evidence>
<gene>
    <name evidence="1" type="primary">argC</name>
    <name type="ordered locus">Sfum_1667</name>
</gene>